<comment type="function">
    <text evidence="1">Component of the acetyl coenzyme A carboxylase (ACC) complex. Biotin carboxylase (BC) catalyzes the carboxylation of biotin on its carrier protein (BCCP) and then the CO(2) group is transferred by the transcarboxylase to acetyl-CoA to form malonyl-CoA.</text>
</comment>
<comment type="catalytic activity">
    <reaction evidence="1">
        <text>N(6)-carboxybiotinyl-L-lysyl-[protein] + acetyl-CoA = N(6)-biotinyl-L-lysyl-[protein] + malonyl-CoA</text>
        <dbReference type="Rhea" id="RHEA:54728"/>
        <dbReference type="Rhea" id="RHEA-COMP:10505"/>
        <dbReference type="Rhea" id="RHEA-COMP:10506"/>
        <dbReference type="ChEBI" id="CHEBI:57288"/>
        <dbReference type="ChEBI" id="CHEBI:57384"/>
        <dbReference type="ChEBI" id="CHEBI:83144"/>
        <dbReference type="ChEBI" id="CHEBI:83145"/>
        <dbReference type="EC" id="2.1.3.15"/>
    </reaction>
</comment>
<comment type="cofactor">
    <cofactor evidence="1">
        <name>Zn(2+)</name>
        <dbReference type="ChEBI" id="CHEBI:29105"/>
    </cofactor>
    <text evidence="1">Binds 1 zinc ion per subunit.</text>
</comment>
<comment type="pathway">
    <text evidence="1">Lipid metabolism; malonyl-CoA biosynthesis; malonyl-CoA from acetyl-CoA: step 1/1.</text>
</comment>
<comment type="subunit">
    <text evidence="1">Acetyl-CoA carboxylase is a heterohexamer composed of biotin carboxyl carrier protein (AccB), biotin carboxylase (AccC) and two subunits each of ACCase subunit alpha (AccA) and ACCase subunit beta (AccD).</text>
</comment>
<comment type="subcellular location">
    <subcellularLocation>
        <location evidence="1">Cytoplasm</location>
    </subcellularLocation>
</comment>
<comment type="similarity">
    <text evidence="1">Belongs to the AccD/PCCB family.</text>
</comment>
<dbReference type="EC" id="2.1.3.15" evidence="1"/>
<dbReference type="EMBL" id="AP007281">
    <property type="protein sequence ID" value="BAG25435.1"/>
    <property type="molecule type" value="Genomic_DNA"/>
</dbReference>
<dbReference type="SMR" id="B2G7K3"/>
<dbReference type="KEGG" id="lrf:LAR_0919"/>
<dbReference type="HOGENOM" id="CLU_015486_1_1_9"/>
<dbReference type="UniPathway" id="UPA00655">
    <property type="reaction ID" value="UER00711"/>
</dbReference>
<dbReference type="GO" id="GO:0009317">
    <property type="term" value="C:acetyl-CoA carboxylase complex"/>
    <property type="evidence" value="ECO:0007669"/>
    <property type="project" value="InterPro"/>
</dbReference>
<dbReference type="GO" id="GO:0003989">
    <property type="term" value="F:acetyl-CoA carboxylase activity"/>
    <property type="evidence" value="ECO:0007669"/>
    <property type="project" value="InterPro"/>
</dbReference>
<dbReference type="GO" id="GO:0005524">
    <property type="term" value="F:ATP binding"/>
    <property type="evidence" value="ECO:0007669"/>
    <property type="project" value="UniProtKB-KW"/>
</dbReference>
<dbReference type="GO" id="GO:0016743">
    <property type="term" value="F:carboxyl- or carbamoyltransferase activity"/>
    <property type="evidence" value="ECO:0007669"/>
    <property type="project" value="UniProtKB-UniRule"/>
</dbReference>
<dbReference type="GO" id="GO:0008270">
    <property type="term" value="F:zinc ion binding"/>
    <property type="evidence" value="ECO:0007669"/>
    <property type="project" value="UniProtKB-UniRule"/>
</dbReference>
<dbReference type="GO" id="GO:0006633">
    <property type="term" value="P:fatty acid biosynthetic process"/>
    <property type="evidence" value="ECO:0007669"/>
    <property type="project" value="UniProtKB-KW"/>
</dbReference>
<dbReference type="GO" id="GO:2001295">
    <property type="term" value="P:malonyl-CoA biosynthetic process"/>
    <property type="evidence" value="ECO:0007669"/>
    <property type="project" value="UniProtKB-UniRule"/>
</dbReference>
<dbReference type="Gene3D" id="3.90.226.10">
    <property type="entry name" value="2-enoyl-CoA Hydratase, Chain A, domain 1"/>
    <property type="match status" value="1"/>
</dbReference>
<dbReference type="HAMAP" id="MF_01395">
    <property type="entry name" value="AcetylCoA_CT_beta"/>
    <property type="match status" value="1"/>
</dbReference>
<dbReference type="InterPro" id="IPR034733">
    <property type="entry name" value="AcCoA_carboxyl_beta"/>
</dbReference>
<dbReference type="InterPro" id="IPR000438">
    <property type="entry name" value="Acetyl_CoA_COase_Trfase_b_su"/>
</dbReference>
<dbReference type="InterPro" id="IPR029045">
    <property type="entry name" value="ClpP/crotonase-like_dom_sf"/>
</dbReference>
<dbReference type="InterPro" id="IPR011762">
    <property type="entry name" value="COA_CT_N"/>
</dbReference>
<dbReference type="InterPro" id="IPR041010">
    <property type="entry name" value="Znf-ACC"/>
</dbReference>
<dbReference type="NCBIfam" id="TIGR00515">
    <property type="entry name" value="accD"/>
    <property type="match status" value="1"/>
</dbReference>
<dbReference type="PANTHER" id="PTHR42995">
    <property type="entry name" value="ACETYL-COENZYME A CARBOXYLASE CARBOXYL TRANSFERASE SUBUNIT BETA, CHLOROPLASTIC"/>
    <property type="match status" value="1"/>
</dbReference>
<dbReference type="PANTHER" id="PTHR42995:SF5">
    <property type="entry name" value="ACETYL-COENZYME A CARBOXYLASE CARBOXYL TRANSFERASE SUBUNIT BETA, CHLOROPLASTIC"/>
    <property type="match status" value="1"/>
</dbReference>
<dbReference type="Pfam" id="PF01039">
    <property type="entry name" value="Carboxyl_trans"/>
    <property type="match status" value="1"/>
</dbReference>
<dbReference type="Pfam" id="PF17848">
    <property type="entry name" value="Zn_ribbon_ACC"/>
    <property type="match status" value="1"/>
</dbReference>
<dbReference type="PRINTS" id="PR01070">
    <property type="entry name" value="ACCCTRFRASEB"/>
</dbReference>
<dbReference type="SUPFAM" id="SSF52096">
    <property type="entry name" value="ClpP/crotonase"/>
    <property type="match status" value="1"/>
</dbReference>
<dbReference type="PROSITE" id="PS50980">
    <property type="entry name" value="COA_CT_NTER"/>
    <property type="match status" value="1"/>
</dbReference>
<keyword id="KW-0067">ATP-binding</keyword>
<keyword id="KW-0963">Cytoplasm</keyword>
<keyword id="KW-0275">Fatty acid biosynthesis</keyword>
<keyword id="KW-0276">Fatty acid metabolism</keyword>
<keyword id="KW-0444">Lipid biosynthesis</keyword>
<keyword id="KW-0443">Lipid metabolism</keyword>
<keyword id="KW-0479">Metal-binding</keyword>
<keyword id="KW-0547">Nucleotide-binding</keyword>
<keyword id="KW-0808">Transferase</keyword>
<keyword id="KW-0862">Zinc</keyword>
<keyword id="KW-0863">Zinc-finger</keyword>
<name>ACCD_LIMRJ</name>
<feature type="chain" id="PRO_0000389772" description="Acetyl-coenzyme A carboxylase carboxyl transferase subunit beta">
    <location>
        <begin position="1"/>
        <end position="289"/>
    </location>
</feature>
<feature type="domain" description="CoA carboxyltransferase N-terminal" evidence="2">
    <location>
        <begin position="36"/>
        <end position="289"/>
    </location>
</feature>
<feature type="zinc finger region" description="C4-type" evidence="1">
    <location>
        <begin position="40"/>
        <end position="61"/>
    </location>
</feature>
<feature type="binding site" evidence="1">
    <location>
        <position position="40"/>
    </location>
    <ligand>
        <name>Zn(2+)</name>
        <dbReference type="ChEBI" id="CHEBI:29105"/>
    </ligand>
</feature>
<feature type="binding site" evidence="1">
    <location>
        <position position="43"/>
    </location>
    <ligand>
        <name>Zn(2+)</name>
        <dbReference type="ChEBI" id="CHEBI:29105"/>
    </ligand>
</feature>
<feature type="binding site" evidence="1">
    <location>
        <position position="58"/>
    </location>
    <ligand>
        <name>Zn(2+)</name>
        <dbReference type="ChEBI" id="CHEBI:29105"/>
    </ligand>
</feature>
<feature type="binding site" evidence="1">
    <location>
        <position position="61"/>
    </location>
    <ligand>
        <name>Zn(2+)</name>
        <dbReference type="ChEBI" id="CHEBI:29105"/>
    </ligand>
</feature>
<gene>
    <name evidence="1" type="primary">accD</name>
    <name type="ordered locus">LAR_0919</name>
</gene>
<reference key="1">
    <citation type="journal article" date="2008" name="DNA Res.">
        <title>Comparative genome analysis of Lactobacillus reuteri and Lactobacillus fermentum reveal a genomic island for reuterin and cobalamin production.</title>
        <authorList>
            <person name="Morita H."/>
            <person name="Toh H."/>
            <person name="Fukuda S."/>
            <person name="Horikawa H."/>
            <person name="Oshima K."/>
            <person name="Suzuki T."/>
            <person name="Murakami M."/>
            <person name="Hisamatsu S."/>
            <person name="Kato Y."/>
            <person name="Takizawa T."/>
            <person name="Fukuoka H."/>
            <person name="Yoshimura T."/>
            <person name="Itoh K."/>
            <person name="O'Sullivan D.J."/>
            <person name="McKay L.L."/>
            <person name="Ohno H."/>
            <person name="Kikuchi J."/>
            <person name="Masaoka T."/>
            <person name="Hattori M."/>
        </authorList>
    </citation>
    <scope>NUCLEOTIDE SEQUENCE [LARGE SCALE GENOMIC DNA]</scope>
    <source>
        <strain>JCM 1112</strain>
    </source>
</reference>
<organism>
    <name type="scientific">Limosilactobacillus reuteri subsp. reuteri (strain JCM 1112)</name>
    <name type="common">Lactobacillus reuteri</name>
    <dbReference type="NCBI Taxonomy" id="557433"/>
    <lineage>
        <taxon>Bacteria</taxon>
        <taxon>Bacillati</taxon>
        <taxon>Bacillota</taxon>
        <taxon>Bacilli</taxon>
        <taxon>Lactobacillales</taxon>
        <taxon>Lactobacillaceae</taxon>
        <taxon>Limosilactobacillus</taxon>
    </lineage>
</organism>
<sequence>MEEGADSVKLYDQNNTLSERHIKADKNADERVPDQMWLRCPHCHQLLFAKQLTQYAVCPNCDYGLRIPARHRLSWLVDSFKEFDKDLQTKNPLHFPGYQEKISKLQRQTKLNDSVLTGEASINDQLFSLGIMDPTFIMGSLGTVTGEKITRLFEYATTHRQAVVLFTASGGARMQEGIMSLMQMAKVSQAINEHAAAGLLYIVVLTDPTTGGVTASFAMDGDIILAEPHALVGFAGRRVIEQTIHQQIPIDLQSAENILHHGFIDRIVKRQDEKKLLEWLLKTGSVANE</sequence>
<proteinExistence type="inferred from homology"/>
<protein>
    <recommendedName>
        <fullName evidence="1">Acetyl-coenzyme A carboxylase carboxyl transferase subunit beta</fullName>
        <shortName evidence="1">ACCase subunit beta</shortName>
        <shortName evidence="1">Acetyl-CoA carboxylase carboxyltransferase subunit beta</shortName>
        <ecNumber evidence="1">2.1.3.15</ecNumber>
    </recommendedName>
</protein>
<evidence type="ECO:0000255" key="1">
    <source>
        <dbReference type="HAMAP-Rule" id="MF_01395"/>
    </source>
</evidence>
<evidence type="ECO:0000255" key="2">
    <source>
        <dbReference type="PROSITE-ProRule" id="PRU01136"/>
    </source>
</evidence>
<accession>B2G7K3</accession>